<evidence type="ECO:0000250" key="1">
    <source>
        <dbReference type="UniProtKB" id="O65648"/>
    </source>
</evidence>
<evidence type="ECO:0000250" key="2">
    <source>
        <dbReference type="UniProtKB" id="Q9FJG1"/>
    </source>
</evidence>
<evidence type="ECO:0000269" key="3">
    <source>
    </source>
</evidence>
<evidence type="ECO:0000303" key="4">
    <source>
    </source>
</evidence>
<evidence type="ECO:0000305" key="5"/>
<evidence type="ECO:0000312" key="6">
    <source>
        <dbReference type="Araport" id="AT2G16580"/>
    </source>
</evidence>
<evidence type="ECO:0000312" key="7">
    <source>
        <dbReference type="EMBL" id="AAD26489.1"/>
    </source>
</evidence>
<reference key="1">
    <citation type="journal article" date="1999" name="Nature">
        <title>Sequence and analysis of chromosome 2 of the plant Arabidopsis thaliana.</title>
        <authorList>
            <person name="Lin X."/>
            <person name="Kaul S."/>
            <person name="Rounsley S.D."/>
            <person name="Shea T.P."/>
            <person name="Benito M.-I."/>
            <person name="Town C.D."/>
            <person name="Fujii C.Y."/>
            <person name="Mason T.M."/>
            <person name="Bowman C.L."/>
            <person name="Barnstead M.E."/>
            <person name="Feldblyum T.V."/>
            <person name="Buell C.R."/>
            <person name="Ketchum K.A."/>
            <person name="Lee J.J."/>
            <person name="Ronning C.M."/>
            <person name="Koo H.L."/>
            <person name="Moffat K.S."/>
            <person name="Cronin L.A."/>
            <person name="Shen M."/>
            <person name="Pai G."/>
            <person name="Van Aken S."/>
            <person name="Umayam L."/>
            <person name="Tallon L.J."/>
            <person name="Gill J.E."/>
            <person name="Adams M.D."/>
            <person name="Carrera A.J."/>
            <person name="Creasy T.H."/>
            <person name="Goodman H.M."/>
            <person name="Somerville C.R."/>
            <person name="Copenhaver G.P."/>
            <person name="Preuss D."/>
            <person name="Nierman W.C."/>
            <person name="White O."/>
            <person name="Eisen J.A."/>
            <person name="Salzberg S.L."/>
            <person name="Fraser C.M."/>
            <person name="Venter J.C."/>
        </authorList>
    </citation>
    <scope>NUCLEOTIDE SEQUENCE [LARGE SCALE GENOMIC DNA]</scope>
    <source>
        <strain>cv. Columbia</strain>
    </source>
</reference>
<reference key="2">
    <citation type="journal article" date="2017" name="Plant J.">
        <title>Araport11: a complete reannotation of the Arabidopsis thaliana reference genome.</title>
        <authorList>
            <person name="Cheng C.Y."/>
            <person name="Krishnakumar V."/>
            <person name="Chan A.P."/>
            <person name="Thibaud-Nissen F."/>
            <person name="Schobel S."/>
            <person name="Town C.D."/>
        </authorList>
    </citation>
    <scope>GENOME REANNOTATION</scope>
    <source>
        <strain>cv. Columbia</strain>
    </source>
</reference>
<reference key="3">
    <citation type="journal article" date="2017" name="BMC Plant Biol.">
        <title>Divergent regulation of Arabidopsis SAUR genes: a focus on the SAUR10-clade.</title>
        <authorList>
            <person name="van Mourik H."/>
            <person name="van Dijk A.D.J."/>
            <person name="Stortenbeker N."/>
            <person name="Angenent G.C."/>
            <person name="Bemer M."/>
        </authorList>
    </citation>
    <scope>FUNCTION</scope>
    <scope>TISSUE SPECIFICITY</scope>
    <scope>DEVELOPMENTAL STAGE</scope>
    <scope>INDUCTION BY ABSCISIC ACID</scope>
    <scope>GENE FAMILY</scope>
    <source>
        <strain>cv. Columbia</strain>
    </source>
</reference>
<keyword id="KW-1003">Cell membrane</keyword>
<keyword id="KW-0217">Developmental protein</keyword>
<keyword id="KW-0341">Growth regulation</keyword>
<keyword id="KW-0472">Membrane</keyword>
<keyword id="KW-1185">Reference proteome</keyword>
<name>SAUR8_ARATH</name>
<proteinExistence type="evidence at transcript level"/>
<feature type="chain" id="PRO_0000455144" description="Protein SMALL AUXIN UP-REGULATED RNA 8">
    <location>
        <begin position="1"/>
        <end position="108"/>
    </location>
</feature>
<comment type="function">
    <text evidence="1 3">Provide a mechanistic link between auxin and plasma membrane H(+)-ATPases (PM H(+)-ATPases, e.g. AHA1 and AHA2), and triggers PM H(+)-ATPases activity by promoting phosphorylation of their C-terminal autoinhibitory domain as a result of PP2C-D subfamily of type 2C phosphatases inhibition, thus leading to the acidification of the apoplast and the facilitation of solutes and water uptake to drive cell expansion (By similarity). Triggers plant growth probably by promoting cell elongation (PubMed:29258424). Regulates branch angles and bending (PubMed:29258424).</text>
</comment>
<comment type="subcellular location">
    <subcellularLocation>
        <location evidence="2">Cell membrane</location>
        <topology evidence="2">Peripheral membrane protein</topology>
    </subcellularLocation>
</comment>
<comment type="tissue specificity">
    <text evidence="3">Expressed in seedlings, leaves and flowers.</text>
</comment>
<comment type="developmental stage">
    <text evidence="3">In leaves, restricted to midveins and petioles (PubMed:29258424). In flowers, present in stamen and pistils styles and stigma (PubMed:29258424).</text>
</comment>
<comment type="induction">
    <text evidence="3">Slightly induced by abscisic acid.</text>
</comment>
<comment type="similarity">
    <text evidence="5">Belongs to the ARG7 family.</text>
</comment>
<dbReference type="EMBL" id="AC007195">
    <property type="protein sequence ID" value="AAD26489.1"/>
    <property type="molecule type" value="Genomic_DNA"/>
</dbReference>
<dbReference type="EMBL" id="CP002685">
    <property type="protein sequence ID" value="AEC06511.1"/>
    <property type="molecule type" value="Genomic_DNA"/>
</dbReference>
<dbReference type="PIR" id="F84541">
    <property type="entry name" value="F84541"/>
</dbReference>
<dbReference type="RefSeq" id="NP_179248.1">
    <property type="nucleotide sequence ID" value="NM_127209.2"/>
</dbReference>
<dbReference type="FunCoup" id="Q9SI60">
    <property type="interactions" value="292"/>
</dbReference>
<dbReference type="STRING" id="3702.Q9SI60"/>
<dbReference type="PaxDb" id="3702-AT2G16580.1"/>
<dbReference type="EnsemblPlants" id="AT2G16580.1">
    <property type="protein sequence ID" value="AT2G16580.1"/>
    <property type="gene ID" value="AT2G16580"/>
</dbReference>
<dbReference type="GeneID" id="816158"/>
<dbReference type="Gramene" id="AT2G16580.1">
    <property type="protein sequence ID" value="AT2G16580.1"/>
    <property type="gene ID" value="AT2G16580"/>
</dbReference>
<dbReference type="KEGG" id="ath:AT2G16580"/>
<dbReference type="Araport" id="AT2G16580"/>
<dbReference type="TAIR" id="AT2G16580">
    <property type="gene designation" value="SAUR8"/>
</dbReference>
<dbReference type="eggNOG" id="ENOG502RZ3M">
    <property type="taxonomic scope" value="Eukaryota"/>
</dbReference>
<dbReference type="HOGENOM" id="CLU_098106_2_3_1"/>
<dbReference type="InParanoid" id="Q9SI60"/>
<dbReference type="OMA" id="CEYFQYE"/>
<dbReference type="OrthoDB" id="1841988at2759"/>
<dbReference type="PhylomeDB" id="Q9SI60"/>
<dbReference type="PRO" id="PR:Q9SI60"/>
<dbReference type="Proteomes" id="UP000006548">
    <property type="component" value="Chromosome 2"/>
</dbReference>
<dbReference type="ExpressionAtlas" id="Q9SI60">
    <property type="expression patterns" value="baseline and differential"/>
</dbReference>
<dbReference type="GO" id="GO:0005886">
    <property type="term" value="C:plasma membrane"/>
    <property type="evidence" value="ECO:0007669"/>
    <property type="project" value="UniProtKB-SubCell"/>
</dbReference>
<dbReference type="GO" id="GO:0009737">
    <property type="term" value="P:response to abscisic acid"/>
    <property type="evidence" value="ECO:0000270"/>
    <property type="project" value="UniProtKB"/>
</dbReference>
<dbReference type="GO" id="GO:0009733">
    <property type="term" value="P:response to auxin"/>
    <property type="evidence" value="ECO:0007669"/>
    <property type="project" value="InterPro"/>
</dbReference>
<dbReference type="InterPro" id="IPR003676">
    <property type="entry name" value="SAUR_fam"/>
</dbReference>
<dbReference type="PANTHER" id="PTHR31929">
    <property type="entry name" value="SAUR-LIKE AUXIN-RESPONSIVE PROTEIN FAMILY-RELATED"/>
    <property type="match status" value="1"/>
</dbReference>
<dbReference type="Pfam" id="PF02519">
    <property type="entry name" value="Auxin_inducible"/>
    <property type="match status" value="1"/>
</dbReference>
<protein>
    <recommendedName>
        <fullName evidence="4">Protein SMALL AUXIN UP-REGULATED RNA 8</fullName>
    </recommendedName>
</protein>
<accession>Q9SI60</accession>
<sequence length="108" mass="12295">MSILKKSTKLAQTAMLRQILKRCSSLGKKNGGGGYEEVDLPLDVPKGHFPVYVGHNRSRYIVPISFLTNLDFQCLLRRAEEEFGFDHDMGLTIPCDELFFQDLTSMIR</sequence>
<gene>
    <name evidence="4" type="primary">SAUR8</name>
    <name evidence="6" type="ordered locus">At2g16580</name>
    <name evidence="7" type="ORF">F1P15.4</name>
</gene>
<organism>
    <name type="scientific">Arabidopsis thaliana</name>
    <name type="common">Mouse-ear cress</name>
    <dbReference type="NCBI Taxonomy" id="3702"/>
    <lineage>
        <taxon>Eukaryota</taxon>
        <taxon>Viridiplantae</taxon>
        <taxon>Streptophyta</taxon>
        <taxon>Embryophyta</taxon>
        <taxon>Tracheophyta</taxon>
        <taxon>Spermatophyta</taxon>
        <taxon>Magnoliopsida</taxon>
        <taxon>eudicotyledons</taxon>
        <taxon>Gunneridae</taxon>
        <taxon>Pentapetalae</taxon>
        <taxon>rosids</taxon>
        <taxon>malvids</taxon>
        <taxon>Brassicales</taxon>
        <taxon>Brassicaceae</taxon>
        <taxon>Camelineae</taxon>
        <taxon>Arabidopsis</taxon>
    </lineage>
</organism>